<keyword id="KW-0961">Cell wall biogenesis/degradation</keyword>
<keyword id="KW-0378">Hydrolase</keyword>
<keyword id="KW-0479">Metal-binding</keyword>
<keyword id="KW-0482">Metalloprotease</keyword>
<keyword id="KW-0645">Protease</keyword>
<keyword id="KW-0964">Secreted</keyword>
<keyword id="KW-0732">Signal</keyword>
<keyword id="KW-0843">Virulence</keyword>
<keyword id="KW-0862">Zinc</keyword>
<keyword id="KW-0865">Zymogen</keyword>
<protein>
    <recommendedName>
        <fullName>Glycyl-glycine endopeptidase LytM</fullName>
        <ecNumber>3.4.24.75</ecNumber>
    </recommendedName>
    <alternativeName>
        <fullName>Autolysin LytM</fullName>
    </alternativeName>
</protein>
<proteinExistence type="inferred from homology"/>
<evidence type="ECO:0000250" key="1"/>
<evidence type="ECO:0000256" key="2">
    <source>
        <dbReference type="SAM" id="MobiDB-lite"/>
    </source>
</evidence>
<evidence type="ECO:0000305" key="3"/>
<sequence length="316" mass="34355">MKKLTAAAIATMGFATFTMAHQADAAETTNTQQAHTQMSTQSQDVSYGTYYTIDSNGDYHHTPDGNWNQAMFDNKEYSYTFVDAQGHTHYFYNCYPKNANANGSGQTYVNPAIAGDNNDYTASQSQQHINQYGYQSNVGPDASYYSHSNNNQAYNSHDGNGKVNYPNGTSNQNGGLASKATASGHAKDASWLTSRKQLQPYGQYHGGGAHYGVDYAMPENSPVYSLTDGTVVQAGWSNYGGGNQVTIKEANSNNYQWYMHNNRLTVSAGDKVKAGDQIAYSGSTGNSTAPHVHFQRMSGGIGNQYAVDPTSYLQSR</sequence>
<organism>
    <name type="scientific">Staphylococcus aureus (strain MSSA476)</name>
    <dbReference type="NCBI Taxonomy" id="282459"/>
    <lineage>
        <taxon>Bacteria</taxon>
        <taxon>Bacillati</taxon>
        <taxon>Bacillota</taxon>
        <taxon>Bacilli</taxon>
        <taxon>Bacillales</taxon>
        <taxon>Staphylococcaceae</taxon>
        <taxon>Staphylococcus</taxon>
    </lineage>
</organism>
<accession>Q6GCJ6</accession>
<feature type="signal peptide" evidence="1">
    <location>
        <begin position="1"/>
        <end position="25"/>
    </location>
</feature>
<feature type="chain" id="PRO_0000026824" description="Glycyl-glycine endopeptidase LytM">
    <location>
        <begin position="26"/>
        <end position="316"/>
    </location>
</feature>
<feature type="region of interest" description="Disordered" evidence="2">
    <location>
        <begin position="133"/>
        <end position="182"/>
    </location>
</feature>
<feature type="compositionally biased region" description="Polar residues" evidence="2">
    <location>
        <begin position="145"/>
        <end position="158"/>
    </location>
</feature>
<feature type="compositionally biased region" description="Polar residues" evidence="2">
    <location>
        <begin position="166"/>
        <end position="175"/>
    </location>
</feature>
<feature type="binding site" evidence="1">
    <location>
        <position position="117"/>
    </location>
    <ligand>
        <name>Zn(2+)</name>
        <dbReference type="ChEBI" id="CHEBI:29105"/>
    </ligand>
</feature>
<feature type="binding site" evidence="1">
    <location>
        <position position="210"/>
    </location>
    <ligand>
        <name>Zn(2+)</name>
        <dbReference type="ChEBI" id="CHEBI:29105"/>
    </ligand>
</feature>
<feature type="binding site" evidence="1">
    <location>
        <position position="214"/>
    </location>
    <ligand>
        <name>Zn(2+)</name>
        <dbReference type="ChEBI" id="CHEBI:29105"/>
    </ligand>
</feature>
<feature type="binding site" evidence="1">
    <location>
        <position position="293"/>
    </location>
    <ligand>
        <name>Zn(2+)</name>
        <dbReference type="ChEBI" id="CHEBI:29105"/>
    </ligand>
</feature>
<name>LYTM_STAAS</name>
<reference key="1">
    <citation type="journal article" date="2004" name="Proc. Natl. Acad. Sci. U.S.A.">
        <title>Complete genomes of two clinical Staphylococcus aureus strains: evidence for the rapid evolution of virulence and drug resistance.</title>
        <authorList>
            <person name="Holden M.T.G."/>
            <person name="Feil E.J."/>
            <person name="Lindsay J.A."/>
            <person name="Peacock S.J."/>
            <person name="Day N.P.J."/>
            <person name="Enright M.C."/>
            <person name="Foster T.J."/>
            <person name="Moore C.E."/>
            <person name="Hurst L."/>
            <person name="Atkin R."/>
            <person name="Barron A."/>
            <person name="Bason N."/>
            <person name="Bentley S.D."/>
            <person name="Chillingworth C."/>
            <person name="Chillingworth T."/>
            <person name="Churcher C."/>
            <person name="Clark L."/>
            <person name="Corton C."/>
            <person name="Cronin A."/>
            <person name="Doggett J."/>
            <person name="Dowd L."/>
            <person name="Feltwell T."/>
            <person name="Hance Z."/>
            <person name="Harris B."/>
            <person name="Hauser H."/>
            <person name="Holroyd S."/>
            <person name="Jagels K."/>
            <person name="James K.D."/>
            <person name="Lennard N."/>
            <person name="Line A."/>
            <person name="Mayes R."/>
            <person name="Moule S."/>
            <person name="Mungall K."/>
            <person name="Ormond D."/>
            <person name="Quail M.A."/>
            <person name="Rabbinowitsch E."/>
            <person name="Rutherford K.M."/>
            <person name="Sanders M."/>
            <person name="Sharp S."/>
            <person name="Simmonds M."/>
            <person name="Stevens K."/>
            <person name="Whitehead S."/>
            <person name="Barrell B.G."/>
            <person name="Spratt B.G."/>
            <person name="Parkhill J."/>
        </authorList>
    </citation>
    <scope>NUCLEOTIDE SEQUENCE [LARGE SCALE GENOMIC DNA]</scope>
    <source>
        <strain>MSSA476</strain>
    </source>
</reference>
<gene>
    <name type="primary">lytM</name>
    <name type="ordered locus">SAS0252</name>
</gene>
<comment type="function">
    <text evidence="1">Peptidoglycan hydrolase (autolysin) specifically acting on polyglycine interpeptide bridges of the cell wall peptidoglycan.</text>
</comment>
<comment type="catalytic activity">
    <reaction>
        <text>Hydrolysis of the -Gly-|-Gly- bond in the pentaglycine inter-peptide link joining staphylococcal cell wall peptidoglycans.</text>
        <dbReference type="EC" id="3.4.24.75"/>
    </reaction>
</comment>
<comment type="cofactor">
    <cofactor evidence="1">
        <name>Zn(2+)</name>
        <dbReference type="ChEBI" id="CHEBI:29105"/>
    </cofactor>
    <text evidence="1">Binds 1 zinc ion per subunit.</text>
</comment>
<comment type="subunit">
    <text evidence="1">Monomer.</text>
</comment>
<comment type="subcellular location">
    <subcellularLocation>
        <location evidence="1">Secreted</location>
    </subcellularLocation>
</comment>
<comment type="similarity">
    <text evidence="3">Belongs to the peptidase M23B family.</text>
</comment>
<dbReference type="EC" id="3.4.24.75"/>
<dbReference type="EMBL" id="BX571857">
    <property type="protein sequence ID" value="CAG42023.1"/>
    <property type="molecule type" value="Genomic_DNA"/>
</dbReference>
<dbReference type="RefSeq" id="WP_000736792.1">
    <property type="nucleotide sequence ID" value="NC_002953.3"/>
</dbReference>
<dbReference type="SMR" id="Q6GCJ6"/>
<dbReference type="MEROPS" id="M23.013"/>
<dbReference type="KEGG" id="sas:SAS0252"/>
<dbReference type="HOGENOM" id="CLU_073067_0_0_9"/>
<dbReference type="GO" id="GO:0005576">
    <property type="term" value="C:extracellular region"/>
    <property type="evidence" value="ECO:0007669"/>
    <property type="project" value="UniProtKB-SubCell"/>
</dbReference>
<dbReference type="GO" id="GO:0046872">
    <property type="term" value="F:metal ion binding"/>
    <property type="evidence" value="ECO:0007669"/>
    <property type="project" value="UniProtKB-KW"/>
</dbReference>
<dbReference type="GO" id="GO:0004222">
    <property type="term" value="F:metalloendopeptidase activity"/>
    <property type="evidence" value="ECO:0007669"/>
    <property type="project" value="TreeGrafter"/>
</dbReference>
<dbReference type="GO" id="GO:0071555">
    <property type="term" value="P:cell wall organization"/>
    <property type="evidence" value="ECO:0007669"/>
    <property type="project" value="UniProtKB-KW"/>
</dbReference>
<dbReference type="GO" id="GO:0006508">
    <property type="term" value="P:proteolysis"/>
    <property type="evidence" value="ECO:0007669"/>
    <property type="project" value="UniProtKB-KW"/>
</dbReference>
<dbReference type="CDD" id="cd12797">
    <property type="entry name" value="M23_peptidase"/>
    <property type="match status" value="1"/>
</dbReference>
<dbReference type="FunFam" id="2.70.70.10:FF:000027">
    <property type="entry name" value="Glycyl-glycine endopeptidase LytM"/>
    <property type="match status" value="1"/>
</dbReference>
<dbReference type="Gene3D" id="2.40.50.290">
    <property type="match status" value="1"/>
</dbReference>
<dbReference type="Gene3D" id="2.70.70.10">
    <property type="entry name" value="Glucose Permease (Domain IIA)"/>
    <property type="match status" value="1"/>
</dbReference>
<dbReference type="InterPro" id="IPR050570">
    <property type="entry name" value="Cell_wall_metabolism_enzyme"/>
</dbReference>
<dbReference type="InterPro" id="IPR011055">
    <property type="entry name" value="Dup_hybrid_motif"/>
</dbReference>
<dbReference type="InterPro" id="IPR016047">
    <property type="entry name" value="Peptidase_M23"/>
</dbReference>
<dbReference type="PANTHER" id="PTHR21666:SF270">
    <property type="entry name" value="MUREIN HYDROLASE ACTIVATOR ENVC"/>
    <property type="match status" value="1"/>
</dbReference>
<dbReference type="PANTHER" id="PTHR21666">
    <property type="entry name" value="PEPTIDASE-RELATED"/>
    <property type="match status" value="1"/>
</dbReference>
<dbReference type="Pfam" id="PF01551">
    <property type="entry name" value="Peptidase_M23"/>
    <property type="match status" value="1"/>
</dbReference>
<dbReference type="SUPFAM" id="SSF51261">
    <property type="entry name" value="Duplicated hybrid motif"/>
    <property type="match status" value="1"/>
</dbReference>